<feature type="chain" id="PRO_0000353478" description="DNA-directed RNA polymerase subunit beta'">
    <location>
        <begin position="1"/>
        <end position="680"/>
    </location>
</feature>
<feature type="binding site" evidence="1">
    <location>
        <position position="69"/>
    </location>
    <ligand>
        <name>Zn(2+)</name>
        <dbReference type="ChEBI" id="CHEBI:29105"/>
    </ligand>
</feature>
<feature type="binding site" evidence="1">
    <location>
        <position position="71"/>
    </location>
    <ligand>
        <name>Zn(2+)</name>
        <dbReference type="ChEBI" id="CHEBI:29105"/>
    </ligand>
</feature>
<feature type="binding site" evidence="1">
    <location>
        <position position="87"/>
    </location>
    <ligand>
        <name>Zn(2+)</name>
        <dbReference type="ChEBI" id="CHEBI:29105"/>
    </ligand>
</feature>
<feature type="binding site" evidence="1">
    <location>
        <position position="90"/>
    </location>
    <ligand>
        <name>Zn(2+)</name>
        <dbReference type="ChEBI" id="CHEBI:29105"/>
    </ligand>
</feature>
<feature type="binding site" evidence="1">
    <location>
        <position position="489"/>
    </location>
    <ligand>
        <name>Mg(2+)</name>
        <dbReference type="ChEBI" id="CHEBI:18420"/>
    </ligand>
</feature>
<feature type="binding site" evidence="1">
    <location>
        <position position="491"/>
    </location>
    <ligand>
        <name>Mg(2+)</name>
        <dbReference type="ChEBI" id="CHEBI:18420"/>
    </ligand>
</feature>
<feature type="binding site" evidence="1">
    <location>
        <position position="493"/>
    </location>
    <ligand>
        <name>Mg(2+)</name>
        <dbReference type="ChEBI" id="CHEBI:18420"/>
    </ligand>
</feature>
<name>RPOC1_CAPBU</name>
<proteinExistence type="inferred from homology"/>
<sequence length="680" mass="78599">MIDRYKHQQLRIGLVSPQQISAWATKIIPNGEIVGEVTKPYTFHYKTNKPEKDGLFCERIFGPIKSGICACGNYRVIGDEKEDPKFCEQCGVEFVDSRIRRYQMGYIKLTCPVTHVWYLKRLPSYIANLLDKPLKELEGLVYCDFSFARPITKKPTFLRLRGSFEYEIQSWKYSIPLFFTTQGFDIFRNREISTGAGAIREQLADLDLRIIIENSLVEWKQLGEEGPTGNEWEDRKIVRRKDFLVRRMELAKHFIRTNIEPEWMVLCLLPVLPPELRPIIQIEGGKLMSSDINELYRRVIYRNNTLTDLLTTSRSTPGELVMCQEKLVQEAVDTLLDNGIRGQPMRDGHNKVYKSFSDVIEGKEGRFRETLLGKRVDYSGRSVIVVGPSLSLHRCGLPREIAIELFQTFVIRGLIRQHLASNIGVAKSQIREKKPIVWEILQEVMQGHPVLLNRAPTLHRLGIQSFQPILVEGRTICLHPLVCKGFNADFDGDQMAVHVPLSLEAQAEARLLMFSHMNLLSPAIGDPISVPTQDMLIGLYVLTSGTRRGICANRYNPCNRKNYQNERIYETNYKYTKEPFFCNSYDAIGAYRQKRIDLDSPLWLRWQLDQRVIASREVPIEVHYESFGNYHEIYAHYLIVRSVKKETFCIYIRTTVGHISFYREIEEAIQGFSQACSYDT</sequence>
<gene>
    <name evidence="1" type="primary">rpoC1</name>
</gene>
<comment type="function">
    <text evidence="1">DNA-dependent RNA polymerase catalyzes the transcription of DNA into RNA using the four ribonucleoside triphosphates as substrates.</text>
</comment>
<comment type="catalytic activity">
    <reaction evidence="1">
        <text>RNA(n) + a ribonucleoside 5'-triphosphate = RNA(n+1) + diphosphate</text>
        <dbReference type="Rhea" id="RHEA:21248"/>
        <dbReference type="Rhea" id="RHEA-COMP:14527"/>
        <dbReference type="Rhea" id="RHEA-COMP:17342"/>
        <dbReference type="ChEBI" id="CHEBI:33019"/>
        <dbReference type="ChEBI" id="CHEBI:61557"/>
        <dbReference type="ChEBI" id="CHEBI:140395"/>
        <dbReference type="EC" id="2.7.7.6"/>
    </reaction>
</comment>
<comment type="cofactor">
    <cofactor evidence="1">
        <name>Mg(2+)</name>
        <dbReference type="ChEBI" id="CHEBI:18420"/>
    </cofactor>
    <text evidence="1">Binds 1 Mg(2+) ion per subunit.</text>
</comment>
<comment type="cofactor">
    <cofactor evidence="1">
        <name>Zn(2+)</name>
        <dbReference type="ChEBI" id="CHEBI:29105"/>
    </cofactor>
    <text evidence="1">Binds 1 Zn(2+) ion per subunit.</text>
</comment>
<comment type="subunit">
    <text evidence="1">In plastids the minimal PEP RNA polymerase catalytic core is composed of four subunits: alpha, beta, beta', and beta''. When a (nuclear-encoded) sigma factor is associated with the core the holoenzyme is formed, which can initiate transcription.</text>
</comment>
<comment type="subcellular location">
    <subcellularLocation>
        <location evidence="1">Plastid</location>
        <location evidence="1">Chloroplast</location>
    </subcellularLocation>
</comment>
<comment type="similarity">
    <text evidence="1">Belongs to the RNA polymerase beta' chain family. RpoC1 subfamily.</text>
</comment>
<accession>A4QKI3</accession>
<geneLocation type="chloroplast"/>
<dbReference type="EC" id="2.7.7.6" evidence="1"/>
<dbReference type="EMBL" id="AP009371">
    <property type="protein sequence ID" value="BAF50188.1"/>
    <property type="molecule type" value="Genomic_DNA"/>
</dbReference>
<dbReference type="RefSeq" id="YP_001123364.1">
    <property type="nucleotide sequence ID" value="NC_009270.1"/>
</dbReference>
<dbReference type="SMR" id="A4QKI3"/>
<dbReference type="GeneID" id="4961626"/>
<dbReference type="GO" id="GO:0009507">
    <property type="term" value="C:chloroplast"/>
    <property type="evidence" value="ECO:0007669"/>
    <property type="project" value="UniProtKB-SubCell"/>
</dbReference>
<dbReference type="GO" id="GO:0000428">
    <property type="term" value="C:DNA-directed RNA polymerase complex"/>
    <property type="evidence" value="ECO:0007669"/>
    <property type="project" value="UniProtKB-KW"/>
</dbReference>
<dbReference type="GO" id="GO:0005739">
    <property type="term" value="C:mitochondrion"/>
    <property type="evidence" value="ECO:0007669"/>
    <property type="project" value="GOC"/>
</dbReference>
<dbReference type="GO" id="GO:0003677">
    <property type="term" value="F:DNA binding"/>
    <property type="evidence" value="ECO:0007669"/>
    <property type="project" value="UniProtKB-UniRule"/>
</dbReference>
<dbReference type="GO" id="GO:0003899">
    <property type="term" value="F:DNA-directed RNA polymerase activity"/>
    <property type="evidence" value="ECO:0007669"/>
    <property type="project" value="UniProtKB-UniRule"/>
</dbReference>
<dbReference type="GO" id="GO:0000287">
    <property type="term" value="F:magnesium ion binding"/>
    <property type="evidence" value="ECO:0007669"/>
    <property type="project" value="UniProtKB-UniRule"/>
</dbReference>
<dbReference type="GO" id="GO:0008270">
    <property type="term" value="F:zinc ion binding"/>
    <property type="evidence" value="ECO:0007669"/>
    <property type="project" value="UniProtKB-UniRule"/>
</dbReference>
<dbReference type="GO" id="GO:0006351">
    <property type="term" value="P:DNA-templated transcription"/>
    <property type="evidence" value="ECO:0007669"/>
    <property type="project" value="UniProtKB-UniRule"/>
</dbReference>
<dbReference type="FunFam" id="1.10.40.90:FF:000002">
    <property type="entry name" value="DNA-directed RNA polymerase subunit"/>
    <property type="match status" value="1"/>
</dbReference>
<dbReference type="FunFam" id="4.10.860.120:FF:000007">
    <property type="entry name" value="DNA-directed RNA polymerase subunit gamma"/>
    <property type="match status" value="1"/>
</dbReference>
<dbReference type="Gene3D" id="1.10.40.90">
    <property type="match status" value="1"/>
</dbReference>
<dbReference type="Gene3D" id="2.40.40.20">
    <property type="match status" value="1"/>
</dbReference>
<dbReference type="Gene3D" id="4.10.860.120">
    <property type="entry name" value="RNA polymerase II, clamp domain"/>
    <property type="match status" value="1"/>
</dbReference>
<dbReference type="Gene3D" id="1.10.274.100">
    <property type="entry name" value="RNA polymerase Rpb1, domain 3"/>
    <property type="match status" value="1"/>
</dbReference>
<dbReference type="HAMAP" id="MF_01323">
    <property type="entry name" value="RNApol_bact_RpoC1"/>
    <property type="match status" value="1"/>
</dbReference>
<dbReference type="InterPro" id="IPR045867">
    <property type="entry name" value="DNA-dir_RpoC_beta_prime"/>
</dbReference>
<dbReference type="InterPro" id="IPR000722">
    <property type="entry name" value="RNA_pol_asu"/>
</dbReference>
<dbReference type="InterPro" id="IPR006592">
    <property type="entry name" value="RNA_pol_N"/>
</dbReference>
<dbReference type="InterPro" id="IPR007080">
    <property type="entry name" value="RNA_pol_Rpb1_1"/>
</dbReference>
<dbReference type="InterPro" id="IPR042102">
    <property type="entry name" value="RNA_pol_Rpb1_3_sf"/>
</dbReference>
<dbReference type="InterPro" id="IPR044893">
    <property type="entry name" value="RNA_pol_Rpb1_clamp_domain"/>
</dbReference>
<dbReference type="InterPro" id="IPR034678">
    <property type="entry name" value="RNApol_RpoC1"/>
</dbReference>
<dbReference type="PANTHER" id="PTHR19376">
    <property type="entry name" value="DNA-DIRECTED RNA POLYMERASE"/>
    <property type="match status" value="1"/>
</dbReference>
<dbReference type="PANTHER" id="PTHR19376:SF54">
    <property type="entry name" value="DNA-DIRECTED RNA POLYMERASE SUBUNIT BETA"/>
    <property type="match status" value="1"/>
</dbReference>
<dbReference type="Pfam" id="PF04997">
    <property type="entry name" value="RNA_pol_Rpb1_1"/>
    <property type="match status" value="1"/>
</dbReference>
<dbReference type="Pfam" id="PF00623">
    <property type="entry name" value="RNA_pol_Rpb1_2"/>
    <property type="match status" value="2"/>
</dbReference>
<dbReference type="SMART" id="SM00663">
    <property type="entry name" value="RPOLA_N"/>
    <property type="match status" value="1"/>
</dbReference>
<dbReference type="SUPFAM" id="SSF64484">
    <property type="entry name" value="beta and beta-prime subunits of DNA dependent RNA-polymerase"/>
    <property type="match status" value="1"/>
</dbReference>
<reference key="1">
    <citation type="submission" date="2007-03" db="EMBL/GenBank/DDBJ databases">
        <title>Sequencing analysis of Capsella bursa-pastoris JO22 chloroplast DNA.</title>
        <authorList>
            <person name="Hosouchi T."/>
            <person name="Tsuruoka H."/>
            <person name="Kotani H."/>
        </authorList>
    </citation>
    <scope>NUCLEOTIDE SEQUENCE [LARGE SCALE GENOMIC DNA]</scope>
</reference>
<protein>
    <recommendedName>
        <fullName evidence="1">DNA-directed RNA polymerase subunit beta'</fullName>
        <ecNumber evidence="1">2.7.7.6</ecNumber>
    </recommendedName>
    <alternativeName>
        <fullName evidence="1">PEP</fullName>
    </alternativeName>
    <alternativeName>
        <fullName evidence="1">Plastid-encoded RNA polymerase subunit beta'</fullName>
        <shortName evidence="1">RNA polymerase subunit beta'</shortName>
    </alternativeName>
</protein>
<evidence type="ECO:0000255" key="1">
    <source>
        <dbReference type="HAMAP-Rule" id="MF_01323"/>
    </source>
</evidence>
<keyword id="KW-0150">Chloroplast</keyword>
<keyword id="KW-0240">DNA-directed RNA polymerase</keyword>
<keyword id="KW-0460">Magnesium</keyword>
<keyword id="KW-0479">Metal-binding</keyword>
<keyword id="KW-0548">Nucleotidyltransferase</keyword>
<keyword id="KW-0934">Plastid</keyword>
<keyword id="KW-0804">Transcription</keyword>
<keyword id="KW-0808">Transferase</keyword>
<keyword id="KW-0862">Zinc</keyword>
<organism>
    <name type="scientific">Capsella bursa-pastoris</name>
    <name type="common">Shepherd's purse</name>
    <name type="synonym">Thlaspi bursa-pastoris</name>
    <dbReference type="NCBI Taxonomy" id="3719"/>
    <lineage>
        <taxon>Eukaryota</taxon>
        <taxon>Viridiplantae</taxon>
        <taxon>Streptophyta</taxon>
        <taxon>Embryophyta</taxon>
        <taxon>Tracheophyta</taxon>
        <taxon>Spermatophyta</taxon>
        <taxon>Magnoliopsida</taxon>
        <taxon>eudicotyledons</taxon>
        <taxon>Gunneridae</taxon>
        <taxon>Pentapetalae</taxon>
        <taxon>rosids</taxon>
        <taxon>malvids</taxon>
        <taxon>Brassicales</taxon>
        <taxon>Brassicaceae</taxon>
        <taxon>Camelineae</taxon>
        <taxon>Capsella</taxon>
    </lineage>
</organism>